<organism>
    <name type="scientific">Xylella fastidiosa (strain 9a5c)</name>
    <dbReference type="NCBI Taxonomy" id="160492"/>
    <lineage>
        <taxon>Bacteria</taxon>
        <taxon>Pseudomonadati</taxon>
        <taxon>Pseudomonadota</taxon>
        <taxon>Gammaproteobacteria</taxon>
        <taxon>Lysobacterales</taxon>
        <taxon>Lysobacteraceae</taxon>
        <taxon>Xylella</taxon>
    </lineage>
</organism>
<gene>
    <name evidence="1" type="primary">hemL</name>
    <name type="ordered locus">XF_2302</name>
</gene>
<name>GSA_XYLFA</name>
<reference key="1">
    <citation type="journal article" date="2000" name="Nature">
        <title>The genome sequence of the plant pathogen Xylella fastidiosa.</title>
        <authorList>
            <person name="Simpson A.J.G."/>
            <person name="Reinach F.C."/>
            <person name="Arruda P."/>
            <person name="Abreu F.A."/>
            <person name="Acencio M."/>
            <person name="Alvarenga R."/>
            <person name="Alves L.M.C."/>
            <person name="Araya J.E."/>
            <person name="Baia G.S."/>
            <person name="Baptista C.S."/>
            <person name="Barros M.H."/>
            <person name="Bonaccorsi E.D."/>
            <person name="Bordin S."/>
            <person name="Bove J.M."/>
            <person name="Briones M.R.S."/>
            <person name="Bueno M.R.P."/>
            <person name="Camargo A.A."/>
            <person name="Camargo L.E.A."/>
            <person name="Carraro D.M."/>
            <person name="Carrer H."/>
            <person name="Colauto N.B."/>
            <person name="Colombo C."/>
            <person name="Costa F.F."/>
            <person name="Costa M.C.R."/>
            <person name="Costa-Neto C.M."/>
            <person name="Coutinho L.L."/>
            <person name="Cristofani M."/>
            <person name="Dias-Neto E."/>
            <person name="Docena C."/>
            <person name="El-Dorry H."/>
            <person name="Facincani A.P."/>
            <person name="Ferreira A.J.S."/>
            <person name="Ferreira V.C.A."/>
            <person name="Ferro J.A."/>
            <person name="Fraga J.S."/>
            <person name="Franca S.C."/>
            <person name="Franco M.C."/>
            <person name="Frohme M."/>
            <person name="Furlan L.R."/>
            <person name="Garnier M."/>
            <person name="Goldman G.H."/>
            <person name="Goldman M.H.S."/>
            <person name="Gomes S.L."/>
            <person name="Gruber A."/>
            <person name="Ho P.L."/>
            <person name="Hoheisel J.D."/>
            <person name="Junqueira M.L."/>
            <person name="Kemper E.L."/>
            <person name="Kitajima J.P."/>
            <person name="Krieger J.E."/>
            <person name="Kuramae E.E."/>
            <person name="Laigret F."/>
            <person name="Lambais M.R."/>
            <person name="Leite L.C.C."/>
            <person name="Lemos E.G.M."/>
            <person name="Lemos M.V.F."/>
            <person name="Lopes S.A."/>
            <person name="Lopes C.R."/>
            <person name="Machado J.A."/>
            <person name="Machado M.A."/>
            <person name="Madeira A.M.B.N."/>
            <person name="Madeira H.M.F."/>
            <person name="Marino C.L."/>
            <person name="Marques M.V."/>
            <person name="Martins E.A.L."/>
            <person name="Martins E.M.F."/>
            <person name="Matsukuma A.Y."/>
            <person name="Menck C.F.M."/>
            <person name="Miracca E.C."/>
            <person name="Miyaki C.Y."/>
            <person name="Monteiro-Vitorello C.B."/>
            <person name="Moon D.H."/>
            <person name="Nagai M.A."/>
            <person name="Nascimento A.L.T.O."/>
            <person name="Netto L.E.S."/>
            <person name="Nhani A. Jr."/>
            <person name="Nobrega F.G."/>
            <person name="Nunes L.R."/>
            <person name="Oliveira M.A."/>
            <person name="de Oliveira M.C."/>
            <person name="de Oliveira R.C."/>
            <person name="Palmieri D.A."/>
            <person name="Paris A."/>
            <person name="Peixoto B.R."/>
            <person name="Pereira G.A.G."/>
            <person name="Pereira H.A. Jr."/>
            <person name="Pesquero J.B."/>
            <person name="Quaggio R.B."/>
            <person name="Roberto P.G."/>
            <person name="Rodrigues V."/>
            <person name="de Rosa A.J.M."/>
            <person name="de Rosa V.E. Jr."/>
            <person name="de Sa R.G."/>
            <person name="Santelli R.V."/>
            <person name="Sawasaki H.E."/>
            <person name="da Silva A.C.R."/>
            <person name="da Silva A.M."/>
            <person name="da Silva F.R."/>
            <person name="Silva W.A. Jr."/>
            <person name="da Silveira J.F."/>
            <person name="Silvestri M.L.Z."/>
            <person name="Siqueira W.J."/>
            <person name="de Souza A.A."/>
            <person name="de Souza A.P."/>
            <person name="Terenzi M.F."/>
            <person name="Truffi D."/>
            <person name="Tsai S.M."/>
            <person name="Tsuhako M.H."/>
            <person name="Vallada H."/>
            <person name="Van Sluys M.A."/>
            <person name="Verjovski-Almeida S."/>
            <person name="Vettore A.L."/>
            <person name="Zago M.A."/>
            <person name="Zatz M."/>
            <person name="Meidanis J."/>
            <person name="Setubal J.C."/>
        </authorList>
    </citation>
    <scope>NUCLEOTIDE SEQUENCE [LARGE SCALE GENOMIC DNA]</scope>
    <source>
        <strain>9a5c</strain>
    </source>
</reference>
<feature type="chain" id="PRO_0000120472" description="Glutamate-1-semialdehyde 2,1-aminomutase">
    <location>
        <begin position="1"/>
        <end position="444"/>
    </location>
</feature>
<feature type="modified residue" description="N6-(pyridoxal phosphate)lysine" evidence="1">
    <location>
        <position position="267"/>
    </location>
</feature>
<comment type="catalytic activity">
    <reaction evidence="1">
        <text>(S)-4-amino-5-oxopentanoate = 5-aminolevulinate</text>
        <dbReference type="Rhea" id="RHEA:14265"/>
        <dbReference type="ChEBI" id="CHEBI:57501"/>
        <dbReference type="ChEBI" id="CHEBI:356416"/>
        <dbReference type="EC" id="5.4.3.8"/>
    </reaction>
</comment>
<comment type="cofactor">
    <cofactor evidence="1">
        <name>pyridoxal 5'-phosphate</name>
        <dbReference type="ChEBI" id="CHEBI:597326"/>
    </cofactor>
</comment>
<comment type="pathway">
    <text evidence="1">Porphyrin-containing compound metabolism; protoporphyrin-IX biosynthesis; 5-aminolevulinate from L-glutamyl-tRNA(Glu): step 2/2.</text>
</comment>
<comment type="subunit">
    <text evidence="1">Homodimer.</text>
</comment>
<comment type="subcellular location">
    <subcellularLocation>
        <location evidence="1">Cytoplasm</location>
    </subcellularLocation>
</comment>
<comment type="similarity">
    <text evidence="1">Belongs to the class-III pyridoxal-phosphate-dependent aminotransferase family. HemL subfamily.</text>
</comment>
<accession>Q9PB43</accession>
<sequence>MNHSRSHTLFVQAQTRIPGGVNSPVRAFRSVGGEPFFVARADGPYLFDVDGHRYIDYVGSWGPMIVGHNHPAVREAVQVAISNGLSYGAPCAAEVTMAETIARLVPSCDMVRMVNSGTEATLSAIRLARGATGRNHIVKFEGCYHGHGDSFLVKGGSGMLTLGMPSSPGVPAELSKLTITLTYNDFDAATALFEEMGHHIAAVIVEPVIGNANCIPPRPGYLQHLRTLCTQYAVLLIFDEVMTGFRVALGGAQALYGVTPDLTTFGKIIGGGMPVGAYGGCRDLMQHIAPAGPIYQAGTLSGNPVAMAAGLAMLELIQAPDFYTHLSNAAAALCTGLQQAASQAGIAMTTQQIGGMFGLFFTDQQVETYAQATACNTDRFNRFFHAMLQRGVFFAPSAYEAGFISSAHSPDIIEATLEAARAAFQTIANEAAILSESEAPLKMP</sequence>
<proteinExistence type="inferred from homology"/>
<protein>
    <recommendedName>
        <fullName evidence="1">Glutamate-1-semialdehyde 2,1-aminomutase</fullName>
        <shortName evidence="1">GSA</shortName>
        <ecNumber evidence="1">5.4.3.8</ecNumber>
    </recommendedName>
    <alternativeName>
        <fullName evidence="1">Glutamate-1-semialdehyde aminotransferase</fullName>
        <shortName evidence="1">GSA-AT</shortName>
    </alternativeName>
</protein>
<dbReference type="EC" id="5.4.3.8" evidence="1"/>
<dbReference type="EMBL" id="AE003849">
    <property type="protein sequence ID" value="AAF85101.1"/>
    <property type="molecule type" value="Genomic_DNA"/>
</dbReference>
<dbReference type="PIR" id="C82576">
    <property type="entry name" value="C82576"/>
</dbReference>
<dbReference type="RefSeq" id="WP_010894749.1">
    <property type="nucleotide sequence ID" value="NC_002488.3"/>
</dbReference>
<dbReference type="SMR" id="Q9PB43"/>
<dbReference type="STRING" id="160492.XF_2302"/>
<dbReference type="KEGG" id="xfa:XF_2302"/>
<dbReference type="eggNOG" id="COG0001">
    <property type="taxonomic scope" value="Bacteria"/>
</dbReference>
<dbReference type="HOGENOM" id="CLU_016922_1_5_6"/>
<dbReference type="UniPathway" id="UPA00251">
    <property type="reaction ID" value="UER00317"/>
</dbReference>
<dbReference type="Proteomes" id="UP000000812">
    <property type="component" value="Chromosome"/>
</dbReference>
<dbReference type="GO" id="GO:0005737">
    <property type="term" value="C:cytoplasm"/>
    <property type="evidence" value="ECO:0007669"/>
    <property type="project" value="UniProtKB-SubCell"/>
</dbReference>
<dbReference type="GO" id="GO:0042286">
    <property type="term" value="F:glutamate-1-semialdehyde 2,1-aminomutase activity"/>
    <property type="evidence" value="ECO:0007669"/>
    <property type="project" value="UniProtKB-UniRule"/>
</dbReference>
<dbReference type="GO" id="GO:0030170">
    <property type="term" value="F:pyridoxal phosphate binding"/>
    <property type="evidence" value="ECO:0007669"/>
    <property type="project" value="InterPro"/>
</dbReference>
<dbReference type="GO" id="GO:0008483">
    <property type="term" value="F:transaminase activity"/>
    <property type="evidence" value="ECO:0007669"/>
    <property type="project" value="InterPro"/>
</dbReference>
<dbReference type="GO" id="GO:0006782">
    <property type="term" value="P:protoporphyrinogen IX biosynthetic process"/>
    <property type="evidence" value="ECO:0007669"/>
    <property type="project" value="UniProtKB-UniRule"/>
</dbReference>
<dbReference type="CDD" id="cd00610">
    <property type="entry name" value="OAT_like"/>
    <property type="match status" value="1"/>
</dbReference>
<dbReference type="FunFam" id="3.40.640.10:FF:000021">
    <property type="entry name" value="Glutamate-1-semialdehyde 2,1-aminomutase"/>
    <property type="match status" value="1"/>
</dbReference>
<dbReference type="Gene3D" id="3.90.1150.10">
    <property type="entry name" value="Aspartate Aminotransferase, domain 1"/>
    <property type="match status" value="1"/>
</dbReference>
<dbReference type="Gene3D" id="3.40.640.10">
    <property type="entry name" value="Type I PLP-dependent aspartate aminotransferase-like (Major domain)"/>
    <property type="match status" value="1"/>
</dbReference>
<dbReference type="HAMAP" id="MF_00375">
    <property type="entry name" value="HemL_aminotrans_3"/>
    <property type="match status" value="1"/>
</dbReference>
<dbReference type="InterPro" id="IPR004639">
    <property type="entry name" value="4pyrrol_synth_GluAld_NH2Trfase"/>
</dbReference>
<dbReference type="InterPro" id="IPR005814">
    <property type="entry name" value="Aminotrans_3"/>
</dbReference>
<dbReference type="InterPro" id="IPR049704">
    <property type="entry name" value="Aminotrans_3_PPA_site"/>
</dbReference>
<dbReference type="InterPro" id="IPR015424">
    <property type="entry name" value="PyrdxlP-dep_Trfase"/>
</dbReference>
<dbReference type="InterPro" id="IPR015421">
    <property type="entry name" value="PyrdxlP-dep_Trfase_major"/>
</dbReference>
<dbReference type="InterPro" id="IPR015422">
    <property type="entry name" value="PyrdxlP-dep_Trfase_small"/>
</dbReference>
<dbReference type="NCBIfam" id="TIGR00713">
    <property type="entry name" value="hemL"/>
    <property type="match status" value="1"/>
</dbReference>
<dbReference type="NCBIfam" id="NF000818">
    <property type="entry name" value="PRK00062.1"/>
    <property type="match status" value="1"/>
</dbReference>
<dbReference type="PANTHER" id="PTHR43713">
    <property type="entry name" value="GLUTAMATE-1-SEMIALDEHYDE 2,1-AMINOMUTASE"/>
    <property type="match status" value="1"/>
</dbReference>
<dbReference type="PANTHER" id="PTHR43713:SF3">
    <property type="entry name" value="GLUTAMATE-1-SEMIALDEHYDE 2,1-AMINOMUTASE 1, CHLOROPLASTIC-RELATED"/>
    <property type="match status" value="1"/>
</dbReference>
<dbReference type="Pfam" id="PF00202">
    <property type="entry name" value="Aminotran_3"/>
    <property type="match status" value="1"/>
</dbReference>
<dbReference type="SUPFAM" id="SSF53383">
    <property type="entry name" value="PLP-dependent transferases"/>
    <property type="match status" value="1"/>
</dbReference>
<dbReference type="PROSITE" id="PS00600">
    <property type="entry name" value="AA_TRANSFER_CLASS_3"/>
    <property type="match status" value="1"/>
</dbReference>
<keyword id="KW-0963">Cytoplasm</keyword>
<keyword id="KW-0413">Isomerase</keyword>
<keyword id="KW-0627">Porphyrin biosynthesis</keyword>
<keyword id="KW-0663">Pyridoxal phosphate</keyword>
<evidence type="ECO:0000255" key="1">
    <source>
        <dbReference type="HAMAP-Rule" id="MF_00375"/>
    </source>
</evidence>